<reference key="1">
    <citation type="journal article" date="2002" name="Genome Res.">
        <title>A complete sequence of the T. tengcongensis genome.</title>
        <authorList>
            <person name="Bao Q."/>
            <person name="Tian Y."/>
            <person name="Li W."/>
            <person name="Xu Z."/>
            <person name="Xuan Z."/>
            <person name="Hu S."/>
            <person name="Dong W."/>
            <person name="Yang J."/>
            <person name="Chen Y."/>
            <person name="Xue Y."/>
            <person name="Xu Y."/>
            <person name="Lai X."/>
            <person name="Huang L."/>
            <person name="Dong X."/>
            <person name="Ma Y."/>
            <person name="Ling L."/>
            <person name="Tan H."/>
            <person name="Chen R."/>
            <person name="Wang J."/>
            <person name="Yu J."/>
            <person name="Yang H."/>
        </authorList>
    </citation>
    <scope>NUCLEOTIDE SEQUENCE [LARGE SCALE GENOMIC DNA]</scope>
    <source>
        <strain>DSM 15242 / JCM 11007 / NBRC 100824 / MB4</strain>
    </source>
</reference>
<feature type="chain" id="PRO_0000189067" description="Probable septum site-determining protein MinC">
    <location>
        <begin position="1"/>
        <end position="214"/>
    </location>
</feature>
<keyword id="KW-0131">Cell cycle</keyword>
<keyword id="KW-0132">Cell division</keyword>
<keyword id="KW-1185">Reference proteome</keyword>
<keyword id="KW-0717">Septation</keyword>
<gene>
    <name evidence="1" type="primary">minC</name>
    <name type="ordered locus">TTE0902</name>
</gene>
<evidence type="ECO:0000255" key="1">
    <source>
        <dbReference type="HAMAP-Rule" id="MF_00267"/>
    </source>
</evidence>
<organism>
    <name type="scientific">Caldanaerobacter subterraneus subsp. tengcongensis (strain DSM 15242 / JCM 11007 / NBRC 100824 / MB4)</name>
    <name type="common">Thermoanaerobacter tengcongensis</name>
    <dbReference type="NCBI Taxonomy" id="273068"/>
    <lineage>
        <taxon>Bacteria</taxon>
        <taxon>Bacillati</taxon>
        <taxon>Bacillota</taxon>
        <taxon>Clostridia</taxon>
        <taxon>Thermoanaerobacterales</taxon>
        <taxon>Thermoanaerobacteraceae</taxon>
        <taxon>Caldanaerobacter</taxon>
    </lineage>
</organism>
<accession>Q8RBC0</accession>
<protein>
    <recommendedName>
        <fullName evidence="1">Probable septum site-determining protein MinC</fullName>
    </recommendedName>
</protein>
<comment type="function">
    <text evidence="1">Cell division inhibitor that blocks the formation of polar Z ring septums. Rapidly oscillates between the poles of the cell to destabilize FtsZ filaments that have formed before they mature into polar Z rings. Prevents FtsZ polymerization.</text>
</comment>
<comment type="subunit">
    <text evidence="1">Interacts with MinD and FtsZ.</text>
</comment>
<comment type="similarity">
    <text evidence="1">Belongs to the MinC family.</text>
</comment>
<sequence>MVREPVKIQGTKEGLVIVVDEDVDIEVLKERIVDRIEKSLKFFEGATLNVRVKNSKFKDEELEDLKDFILKNYGVEIFIKKFQEKHIKNVTDDEIFNGLEEGITKFHRGTVRSGQVVKYYGNLVIIGDVNPGGLVQAAGNIVVTGTLRGIAHAGFTGNKEAFIVASSLKAMQLRIANIISRAPDKEEEVEYPEIAVVRKNKIIVRPLYHLSDLW</sequence>
<dbReference type="EMBL" id="AE008691">
    <property type="protein sequence ID" value="AAM24158.1"/>
    <property type="molecule type" value="Genomic_DNA"/>
</dbReference>
<dbReference type="RefSeq" id="WP_011025280.1">
    <property type="nucleotide sequence ID" value="NZ_JANUCV010000001.1"/>
</dbReference>
<dbReference type="SMR" id="Q8RBC0"/>
<dbReference type="STRING" id="273068.TTE0902"/>
<dbReference type="KEGG" id="tte:TTE0902"/>
<dbReference type="eggNOG" id="COG0850">
    <property type="taxonomic scope" value="Bacteria"/>
</dbReference>
<dbReference type="HOGENOM" id="CLU_048711_2_0_9"/>
<dbReference type="OrthoDB" id="9790810at2"/>
<dbReference type="Proteomes" id="UP000000555">
    <property type="component" value="Chromosome"/>
</dbReference>
<dbReference type="GO" id="GO:0000902">
    <property type="term" value="P:cell morphogenesis"/>
    <property type="evidence" value="ECO:0007669"/>
    <property type="project" value="InterPro"/>
</dbReference>
<dbReference type="GO" id="GO:0000917">
    <property type="term" value="P:division septum assembly"/>
    <property type="evidence" value="ECO:0007669"/>
    <property type="project" value="UniProtKB-KW"/>
</dbReference>
<dbReference type="GO" id="GO:0051302">
    <property type="term" value="P:regulation of cell division"/>
    <property type="evidence" value="ECO:0007669"/>
    <property type="project" value="InterPro"/>
</dbReference>
<dbReference type="GO" id="GO:1901891">
    <property type="term" value="P:regulation of cell septum assembly"/>
    <property type="evidence" value="ECO:0007669"/>
    <property type="project" value="InterPro"/>
</dbReference>
<dbReference type="Gene3D" id="2.160.20.70">
    <property type="match status" value="1"/>
</dbReference>
<dbReference type="Gene3D" id="3.30.160.540">
    <property type="match status" value="1"/>
</dbReference>
<dbReference type="HAMAP" id="MF_00267">
    <property type="entry name" value="MinC"/>
    <property type="match status" value="1"/>
</dbReference>
<dbReference type="InterPro" id="IPR016098">
    <property type="entry name" value="CAP/MinC_C"/>
</dbReference>
<dbReference type="InterPro" id="IPR013033">
    <property type="entry name" value="MinC"/>
</dbReference>
<dbReference type="InterPro" id="IPR036145">
    <property type="entry name" value="MinC_C_sf"/>
</dbReference>
<dbReference type="InterPro" id="IPR007874">
    <property type="entry name" value="MinC_N"/>
</dbReference>
<dbReference type="InterPro" id="IPR005526">
    <property type="entry name" value="Septum_form_inhib_MinC_C"/>
</dbReference>
<dbReference type="NCBIfam" id="TIGR01222">
    <property type="entry name" value="minC"/>
    <property type="match status" value="1"/>
</dbReference>
<dbReference type="PANTHER" id="PTHR34108">
    <property type="entry name" value="SEPTUM SITE-DETERMINING PROTEIN MINC"/>
    <property type="match status" value="1"/>
</dbReference>
<dbReference type="PANTHER" id="PTHR34108:SF1">
    <property type="entry name" value="SEPTUM SITE-DETERMINING PROTEIN MINC"/>
    <property type="match status" value="1"/>
</dbReference>
<dbReference type="Pfam" id="PF03775">
    <property type="entry name" value="MinC_C"/>
    <property type="match status" value="1"/>
</dbReference>
<dbReference type="Pfam" id="PF05209">
    <property type="entry name" value="MinC_N"/>
    <property type="match status" value="1"/>
</dbReference>
<dbReference type="SUPFAM" id="SSF63848">
    <property type="entry name" value="Cell-division inhibitor MinC, C-terminal domain"/>
    <property type="match status" value="1"/>
</dbReference>
<proteinExistence type="inferred from homology"/>
<name>MINC_CALS4</name>